<gene>
    <name evidence="1" type="primary">rpsJ</name>
    <name type="ordered locus">THA_1214</name>
</gene>
<proteinExistence type="inferred from homology"/>
<keyword id="KW-1185">Reference proteome</keyword>
<keyword id="KW-0687">Ribonucleoprotein</keyword>
<keyword id="KW-0689">Ribosomal protein</keyword>
<dbReference type="EMBL" id="CP001185">
    <property type="protein sequence ID" value="ACJ75659.1"/>
    <property type="molecule type" value="Genomic_DNA"/>
</dbReference>
<dbReference type="RefSeq" id="WP_004101436.1">
    <property type="nucleotide sequence ID" value="NC_011653.1"/>
</dbReference>
<dbReference type="SMR" id="B7IHU5"/>
<dbReference type="STRING" id="484019.THA_1214"/>
<dbReference type="KEGG" id="taf:THA_1214"/>
<dbReference type="eggNOG" id="COG0051">
    <property type="taxonomic scope" value="Bacteria"/>
</dbReference>
<dbReference type="HOGENOM" id="CLU_122625_1_3_0"/>
<dbReference type="OrthoDB" id="9804464at2"/>
<dbReference type="Proteomes" id="UP000002453">
    <property type="component" value="Chromosome"/>
</dbReference>
<dbReference type="GO" id="GO:1990904">
    <property type="term" value="C:ribonucleoprotein complex"/>
    <property type="evidence" value="ECO:0007669"/>
    <property type="project" value="UniProtKB-KW"/>
</dbReference>
<dbReference type="GO" id="GO:0005840">
    <property type="term" value="C:ribosome"/>
    <property type="evidence" value="ECO:0007669"/>
    <property type="project" value="UniProtKB-KW"/>
</dbReference>
<dbReference type="GO" id="GO:0003735">
    <property type="term" value="F:structural constituent of ribosome"/>
    <property type="evidence" value="ECO:0007669"/>
    <property type="project" value="InterPro"/>
</dbReference>
<dbReference type="GO" id="GO:0000049">
    <property type="term" value="F:tRNA binding"/>
    <property type="evidence" value="ECO:0007669"/>
    <property type="project" value="UniProtKB-UniRule"/>
</dbReference>
<dbReference type="GO" id="GO:0006412">
    <property type="term" value="P:translation"/>
    <property type="evidence" value="ECO:0007669"/>
    <property type="project" value="UniProtKB-UniRule"/>
</dbReference>
<dbReference type="FunFam" id="3.30.70.600:FF:000001">
    <property type="entry name" value="30S ribosomal protein S10"/>
    <property type="match status" value="1"/>
</dbReference>
<dbReference type="Gene3D" id="3.30.70.600">
    <property type="entry name" value="Ribosomal protein S10 domain"/>
    <property type="match status" value="1"/>
</dbReference>
<dbReference type="HAMAP" id="MF_00508">
    <property type="entry name" value="Ribosomal_uS10"/>
    <property type="match status" value="1"/>
</dbReference>
<dbReference type="InterPro" id="IPR001848">
    <property type="entry name" value="Ribosomal_uS10"/>
</dbReference>
<dbReference type="InterPro" id="IPR018268">
    <property type="entry name" value="Ribosomal_uS10_CS"/>
</dbReference>
<dbReference type="InterPro" id="IPR027486">
    <property type="entry name" value="Ribosomal_uS10_dom"/>
</dbReference>
<dbReference type="InterPro" id="IPR036838">
    <property type="entry name" value="Ribosomal_uS10_dom_sf"/>
</dbReference>
<dbReference type="NCBIfam" id="NF001861">
    <property type="entry name" value="PRK00596.1"/>
    <property type="match status" value="1"/>
</dbReference>
<dbReference type="NCBIfam" id="TIGR01049">
    <property type="entry name" value="rpsJ_bact"/>
    <property type="match status" value="1"/>
</dbReference>
<dbReference type="PANTHER" id="PTHR11700">
    <property type="entry name" value="30S RIBOSOMAL PROTEIN S10 FAMILY MEMBER"/>
    <property type="match status" value="1"/>
</dbReference>
<dbReference type="Pfam" id="PF00338">
    <property type="entry name" value="Ribosomal_S10"/>
    <property type="match status" value="1"/>
</dbReference>
<dbReference type="PRINTS" id="PR00971">
    <property type="entry name" value="RIBOSOMALS10"/>
</dbReference>
<dbReference type="SMART" id="SM01403">
    <property type="entry name" value="Ribosomal_S10"/>
    <property type="match status" value="1"/>
</dbReference>
<dbReference type="SUPFAM" id="SSF54999">
    <property type="entry name" value="Ribosomal protein S10"/>
    <property type="match status" value="1"/>
</dbReference>
<dbReference type="PROSITE" id="PS00361">
    <property type="entry name" value="RIBOSOMAL_S10"/>
    <property type="match status" value="1"/>
</dbReference>
<comment type="function">
    <text evidence="1">Involved in the binding of tRNA to the ribosomes.</text>
</comment>
<comment type="subunit">
    <text evidence="1">Part of the 30S ribosomal subunit.</text>
</comment>
<comment type="similarity">
    <text evidence="1">Belongs to the universal ribosomal protein uS10 family.</text>
</comment>
<reference key="1">
    <citation type="journal article" date="2009" name="J. Bacteriol.">
        <title>The genome of Thermosipho africanus TCF52B: lateral genetic connections to the Firmicutes and Archaea.</title>
        <authorList>
            <person name="Nesboe C.L."/>
            <person name="Bapteste E."/>
            <person name="Curtis B."/>
            <person name="Dahle H."/>
            <person name="Lopez P."/>
            <person name="Macleod D."/>
            <person name="Dlutek M."/>
            <person name="Bowman S."/>
            <person name="Zhaxybayeva O."/>
            <person name="Birkeland N.-K."/>
            <person name="Doolittle W.F."/>
        </authorList>
    </citation>
    <scope>NUCLEOTIDE SEQUENCE [LARGE SCALE GENOMIC DNA]</scope>
    <source>
        <strain>TCF52B</strain>
    </source>
</reference>
<organism>
    <name type="scientific">Thermosipho africanus (strain TCF52B)</name>
    <dbReference type="NCBI Taxonomy" id="484019"/>
    <lineage>
        <taxon>Bacteria</taxon>
        <taxon>Thermotogati</taxon>
        <taxon>Thermotogota</taxon>
        <taxon>Thermotogae</taxon>
        <taxon>Thermotogales</taxon>
        <taxon>Fervidobacteriaceae</taxon>
        <taxon>Thermosipho</taxon>
    </lineage>
</organism>
<evidence type="ECO:0000255" key="1">
    <source>
        <dbReference type="HAMAP-Rule" id="MF_00508"/>
    </source>
</evidence>
<evidence type="ECO:0000305" key="2"/>
<accession>B7IHU5</accession>
<feature type="chain" id="PRO_1000127194" description="Small ribosomal subunit protein uS10">
    <location>
        <begin position="1"/>
        <end position="102"/>
    </location>
</feature>
<protein>
    <recommendedName>
        <fullName evidence="1">Small ribosomal subunit protein uS10</fullName>
    </recommendedName>
    <alternativeName>
        <fullName evidence="2">30S ribosomal protein S10</fullName>
    </alternativeName>
</protein>
<name>RS10_THEAB</name>
<sequence>MPGQKIRIRLKAYDHKLLDESAKKIVEIVKQTNAKVSGPIPLPTERTLYVVLRSPLKHKDSREQFEKRIHKRLIDILEPSPKTIDALMKINLPAGVDVEINL</sequence>